<name>HELT_DANRE</name>
<feature type="chain" id="PRO_0000349385" description="Hairy and enhancer of split-related protein helt">
    <location>
        <begin position="1"/>
        <end position="270"/>
    </location>
</feature>
<feature type="domain" description="bHLH" evidence="3">
    <location>
        <begin position="59"/>
        <end position="114"/>
    </location>
</feature>
<feature type="domain" description="Orange" evidence="2">
    <location>
        <begin position="136"/>
        <end position="171"/>
    </location>
</feature>
<feature type="region of interest" description="Disordered" evidence="4">
    <location>
        <begin position="1"/>
        <end position="24"/>
    </location>
</feature>
<protein>
    <recommendedName>
        <fullName>Hairy and enhancer of split-related protein helt</fullName>
    </recommendedName>
    <alternativeName>
        <fullName>HES/HEY-like transcription factor</fullName>
    </alternativeName>
</protein>
<keyword id="KW-0238">DNA-binding</keyword>
<keyword id="KW-0539">Nucleus</keyword>
<keyword id="KW-1185">Reference proteome</keyword>
<keyword id="KW-0678">Repressor</keyword>
<keyword id="KW-0804">Transcription</keyword>
<keyword id="KW-0805">Transcription regulation</keyword>
<comment type="function">
    <text evidence="1">Transcriptional repressor which binds preferentially to the canonical E box sequence 5'-CACGCG-3'.</text>
</comment>
<comment type="subcellular location">
    <subcellularLocation>
        <location evidence="2 3">Nucleus</location>
    </subcellularLocation>
</comment>
<comment type="similarity">
    <text evidence="5">Belongs to the HEY family.</text>
</comment>
<reference key="1">
    <citation type="submission" date="2004-02" db="EMBL/GenBank/DDBJ databases">
        <title>Her/Hey-related shows highly restricted expression in the developing brain of the zebrafish embryo.</title>
        <authorList>
            <person name="Gajewski M."/>
            <person name="Sieger D."/>
            <person name="Tautz D."/>
        </authorList>
    </citation>
    <scope>NUCLEOTIDE SEQUENCE [MRNA]</scope>
</reference>
<reference key="2">
    <citation type="submission" date="2005-04" db="EMBL/GenBank/DDBJ databases">
        <authorList>
            <consortium name="NIH - Zebrafish Gene Collection (ZGC) project"/>
        </authorList>
    </citation>
    <scope>NUCLEOTIDE SEQUENCE [LARGE SCALE MRNA]</scope>
    <source>
        <tissue>Olfactory epithelium</tissue>
    </source>
</reference>
<sequence>MNARALYKRPPPVSSSQSEASGKRRTRTLDALGFDNYIICNYRLVFYEMMASKMKDRKKTPVSHKVIEKRRRDRINRCLNELGKTVPMALAKQNSGKLEKAEILEMTVQYLRALHSADFPRGREKGELLTEFANYFHYGYHECMKNLVHYLTTVERMETKDTKYARILAFLQSKVVTEPVFGSLGTISPDPTDLLCQLEYQSPSPTESVFQQSPPGHFSWHSSTRSPTLAYPAMSQHSGYLSPVQGLDHHYMNFIGHNAFSLHNAQHAAL</sequence>
<evidence type="ECO:0000250" key="1"/>
<evidence type="ECO:0000255" key="2">
    <source>
        <dbReference type="PROSITE-ProRule" id="PRU00380"/>
    </source>
</evidence>
<evidence type="ECO:0000255" key="3">
    <source>
        <dbReference type="PROSITE-ProRule" id="PRU00981"/>
    </source>
</evidence>
<evidence type="ECO:0000256" key="4">
    <source>
        <dbReference type="SAM" id="MobiDB-lite"/>
    </source>
</evidence>
<evidence type="ECO:0000305" key="5"/>
<proteinExistence type="evidence at transcript level"/>
<gene>
    <name type="primary">helt</name>
    <name type="ORF">zgc:109704</name>
</gene>
<organism>
    <name type="scientific">Danio rerio</name>
    <name type="common">Zebrafish</name>
    <name type="synonym">Brachydanio rerio</name>
    <dbReference type="NCBI Taxonomy" id="7955"/>
    <lineage>
        <taxon>Eukaryota</taxon>
        <taxon>Metazoa</taxon>
        <taxon>Chordata</taxon>
        <taxon>Craniata</taxon>
        <taxon>Vertebrata</taxon>
        <taxon>Euteleostomi</taxon>
        <taxon>Actinopterygii</taxon>
        <taxon>Neopterygii</taxon>
        <taxon>Teleostei</taxon>
        <taxon>Ostariophysi</taxon>
        <taxon>Cypriniformes</taxon>
        <taxon>Danionidae</taxon>
        <taxon>Danioninae</taxon>
        <taxon>Danio</taxon>
    </lineage>
</organism>
<dbReference type="EMBL" id="AY549496">
    <property type="protein sequence ID" value="AAS55698.1"/>
    <property type="molecule type" value="mRNA"/>
</dbReference>
<dbReference type="EMBL" id="BC092667">
    <property type="protein sequence ID" value="AAH92667.2"/>
    <property type="molecule type" value="mRNA"/>
</dbReference>
<dbReference type="RefSeq" id="NP_996948.1">
    <property type="nucleotide sequence ID" value="NM_207065.2"/>
</dbReference>
<dbReference type="SMR" id="Q6QB00"/>
<dbReference type="FunCoup" id="Q6QB00">
    <property type="interactions" value="882"/>
</dbReference>
<dbReference type="STRING" id="7955.ENSDARP00000073348"/>
<dbReference type="PaxDb" id="7955-ENSDARP00000073348"/>
<dbReference type="Ensembl" id="ENSDART00000078889">
    <property type="protein sequence ID" value="ENSDARP00000073348"/>
    <property type="gene ID" value="ENSDARG00000056400"/>
</dbReference>
<dbReference type="GeneID" id="404275"/>
<dbReference type="KEGG" id="dre:404275"/>
<dbReference type="AGR" id="ZFIN:ZDB-GENE-040824-6"/>
<dbReference type="CTD" id="391723"/>
<dbReference type="ZFIN" id="ZDB-GENE-040824-6">
    <property type="gene designation" value="helt"/>
</dbReference>
<dbReference type="eggNOG" id="KOG4304">
    <property type="taxonomic scope" value="Eukaryota"/>
</dbReference>
<dbReference type="HOGENOM" id="CLU_084227_0_0_1"/>
<dbReference type="InParanoid" id="Q6QB00"/>
<dbReference type="OMA" id="GHTHANA"/>
<dbReference type="OrthoDB" id="6371181at2759"/>
<dbReference type="PhylomeDB" id="Q6QB00"/>
<dbReference type="TreeFam" id="TF323617"/>
<dbReference type="PRO" id="PR:Q6QB00"/>
<dbReference type="Proteomes" id="UP000000437">
    <property type="component" value="Chromosome 1"/>
</dbReference>
<dbReference type="Bgee" id="ENSDARG00000056400">
    <property type="expression patterns" value="Expressed in dorsal thalamus and 11 other cell types or tissues"/>
</dbReference>
<dbReference type="ExpressionAtlas" id="Q6QB00">
    <property type="expression patterns" value="baseline"/>
</dbReference>
<dbReference type="GO" id="GO:0005634">
    <property type="term" value="C:nucleus"/>
    <property type="evidence" value="ECO:0000318"/>
    <property type="project" value="GO_Central"/>
</dbReference>
<dbReference type="GO" id="GO:0046983">
    <property type="term" value="F:protein dimerization activity"/>
    <property type="evidence" value="ECO:0007669"/>
    <property type="project" value="InterPro"/>
</dbReference>
<dbReference type="GO" id="GO:0000978">
    <property type="term" value="F:RNA polymerase II cis-regulatory region sequence-specific DNA binding"/>
    <property type="evidence" value="ECO:0000318"/>
    <property type="project" value="GO_Central"/>
</dbReference>
<dbReference type="GO" id="GO:0006355">
    <property type="term" value="P:regulation of DNA-templated transcription"/>
    <property type="evidence" value="ECO:0007669"/>
    <property type="project" value="InterPro"/>
</dbReference>
<dbReference type="GO" id="GO:0050767">
    <property type="term" value="P:regulation of neurogenesis"/>
    <property type="evidence" value="ECO:0000318"/>
    <property type="project" value="GO_Central"/>
</dbReference>
<dbReference type="CDD" id="cd11408">
    <property type="entry name" value="bHLH-O_HELT"/>
    <property type="match status" value="1"/>
</dbReference>
<dbReference type="FunFam" id="4.10.280.10:FF:000054">
    <property type="entry name" value="hairy and enhancer of split-related protein HELT"/>
    <property type="match status" value="1"/>
</dbReference>
<dbReference type="Gene3D" id="6.10.250.980">
    <property type="match status" value="1"/>
</dbReference>
<dbReference type="Gene3D" id="4.10.280.10">
    <property type="entry name" value="Helix-loop-helix DNA-binding domain"/>
    <property type="match status" value="1"/>
</dbReference>
<dbReference type="InterPro" id="IPR011598">
    <property type="entry name" value="bHLH_dom"/>
</dbReference>
<dbReference type="InterPro" id="IPR050370">
    <property type="entry name" value="HES_HEY"/>
</dbReference>
<dbReference type="InterPro" id="IPR036638">
    <property type="entry name" value="HLH_DNA-bd_sf"/>
</dbReference>
<dbReference type="InterPro" id="IPR003650">
    <property type="entry name" value="Orange_dom"/>
</dbReference>
<dbReference type="PANTHER" id="PTHR10985">
    <property type="entry name" value="BASIC HELIX-LOOP-HELIX TRANSCRIPTION FACTOR, HES-RELATED"/>
    <property type="match status" value="1"/>
</dbReference>
<dbReference type="Pfam" id="PF07527">
    <property type="entry name" value="Hairy_orange"/>
    <property type="match status" value="1"/>
</dbReference>
<dbReference type="Pfam" id="PF00010">
    <property type="entry name" value="HLH"/>
    <property type="match status" value="1"/>
</dbReference>
<dbReference type="SMART" id="SM00353">
    <property type="entry name" value="HLH"/>
    <property type="match status" value="1"/>
</dbReference>
<dbReference type="SUPFAM" id="SSF47459">
    <property type="entry name" value="HLH, helix-loop-helix DNA-binding domain"/>
    <property type="match status" value="1"/>
</dbReference>
<dbReference type="SUPFAM" id="SSF158457">
    <property type="entry name" value="Orange domain-like"/>
    <property type="match status" value="1"/>
</dbReference>
<dbReference type="PROSITE" id="PS50888">
    <property type="entry name" value="BHLH"/>
    <property type="match status" value="1"/>
</dbReference>
<dbReference type="PROSITE" id="PS51054">
    <property type="entry name" value="ORANGE"/>
    <property type="match status" value="1"/>
</dbReference>
<accession>Q6QB00</accession>
<accession>Q568X6</accession>